<keyword id="KW-0025">Alternative splicing</keyword>
<keyword id="KW-0106">Calcium</keyword>
<keyword id="KW-0966">Cell projection</keyword>
<keyword id="KW-0969">Cilium</keyword>
<keyword id="KW-0963">Cytoplasm</keyword>
<keyword id="KW-0206">Cytoskeleton</keyword>
<keyword id="KW-0282">Flagellum</keyword>
<keyword id="KW-0479">Metal-binding</keyword>
<keyword id="KW-1185">Reference proteome</keyword>
<keyword id="KW-0677">Repeat</keyword>
<gene>
    <name type="primary">Clxn</name>
    <name evidence="8" type="synonym">Efcab1</name>
</gene>
<evidence type="ECO:0000250" key="1">
    <source>
        <dbReference type="UniProtKB" id="Q32L26"/>
    </source>
</evidence>
<evidence type="ECO:0000250" key="2">
    <source>
        <dbReference type="UniProtKB" id="Q9HAE3"/>
    </source>
</evidence>
<evidence type="ECO:0000255" key="3">
    <source>
        <dbReference type="PROSITE-ProRule" id="PRU00448"/>
    </source>
</evidence>
<evidence type="ECO:0000269" key="4">
    <source>
    </source>
</evidence>
<evidence type="ECO:0000303" key="5">
    <source>
    </source>
</evidence>
<evidence type="ECO:0000303" key="6">
    <source>
    </source>
</evidence>
<evidence type="ECO:0000305" key="7"/>
<evidence type="ECO:0000312" key="8">
    <source>
        <dbReference type="MGI" id="MGI:1914043"/>
    </source>
</evidence>
<organism>
    <name type="scientific">Mus musculus</name>
    <name type="common">Mouse</name>
    <dbReference type="NCBI Taxonomy" id="10090"/>
    <lineage>
        <taxon>Eukaryota</taxon>
        <taxon>Metazoa</taxon>
        <taxon>Chordata</taxon>
        <taxon>Craniata</taxon>
        <taxon>Vertebrata</taxon>
        <taxon>Euteleostomi</taxon>
        <taxon>Mammalia</taxon>
        <taxon>Eutheria</taxon>
        <taxon>Euarchontoglires</taxon>
        <taxon>Glires</taxon>
        <taxon>Rodentia</taxon>
        <taxon>Myomorpha</taxon>
        <taxon>Muroidea</taxon>
        <taxon>Muridae</taxon>
        <taxon>Murinae</taxon>
        <taxon>Mus</taxon>
        <taxon>Mus</taxon>
    </lineage>
</organism>
<accession>Q9D3N2</accession>
<accession>Q8BSW3</accession>
<accession>Q8C982</accession>
<accession>Q8CAI0</accession>
<accession>Q9D527</accession>
<accession>Q9D5E7</accession>
<reference key="1">
    <citation type="journal article" date="2005" name="Science">
        <title>The transcriptional landscape of the mammalian genome.</title>
        <authorList>
            <person name="Carninci P."/>
            <person name="Kasukawa T."/>
            <person name="Katayama S."/>
            <person name="Gough J."/>
            <person name="Frith M.C."/>
            <person name="Maeda N."/>
            <person name="Oyama R."/>
            <person name="Ravasi T."/>
            <person name="Lenhard B."/>
            <person name="Wells C."/>
            <person name="Kodzius R."/>
            <person name="Shimokawa K."/>
            <person name="Bajic V.B."/>
            <person name="Brenner S.E."/>
            <person name="Batalov S."/>
            <person name="Forrest A.R."/>
            <person name="Zavolan M."/>
            <person name="Davis M.J."/>
            <person name="Wilming L.G."/>
            <person name="Aidinis V."/>
            <person name="Allen J.E."/>
            <person name="Ambesi-Impiombato A."/>
            <person name="Apweiler R."/>
            <person name="Aturaliya R.N."/>
            <person name="Bailey T.L."/>
            <person name="Bansal M."/>
            <person name="Baxter L."/>
            <person name="Beisel K.W."/>
            <person name="Bersano T."/>
            <person name="Bono H."/>
            <person name="Chalk A.M."/>
            <person name="Chiu K.P."/>
            <person name="Choudhary V."/>
            <person name="Christoffels A."/>
            <person name="Clutterbuck D.R."/>
            <person name="Crowe M.L."/>
            <person name="Dalla E."/>
            <person name="Dalrymple B.P."/>
            <person name="de Bono B."/>
            <person name="Della Gatta G."/>
            <person name="di Bernardo D."/>
            <person name="Down T."/>
            <person name="Engstrom P."/>
            <person name="Fagiolini M."/>
            <person name="Faulkner G."/>
            <person name="Fletcher C.F."/>
            <person name="Fukushima T."/>
            <person name="Furuno M."/>
            <person name="Futaki S."/>
            <person name="Gariboldi M."/>
            <person name="Georgii-Hemming P."/>
            <person name="Gingeras T.R."/>
            <person name="Gojobori T."/>
            <person name="Green R.E."/>
            <person name="Gustincich S."/>
            <person name="Harbers M."/>
            <person name="Hayashi Y."/>
            <person name="Hensch T.K."/>
            <person name="Hirokawa N."/>
            <person name="Hill D."/>
            <person name="Huminiecki L."/>
            <person name="Iacono M."/>
            <person name="Ikeo K."/>
            <person name="Iwama A."/>
            <person name="Ishikawa T."/>
            <person name="Jakt M."/>
            <person name="Kanapin A."/>
            <person name="Katoh M."/>
            <person name="Kawasawa Y."/>
            <person name="Kelso J."/>
            <person name="Kitamura H."/>
            <person name="Kitano H."/>
            <person name="Kollias G."/>
            <person name="Krishnan S.P."/>
            <person name="Kruger A."/>
            <person name="Kummerfeld S.K."/>
            <person name="Kurochkin I.V."/>
            <person name="Lareau L.F."/>
            <person name="Lazarevic D."/>
            <person name="Lipovich L."/>
            <person name="Liu J."/>
            <person name="Liuni S."/>
            <person name="McWilliam S."/>
            <person name="Madan Babu M."/>
            <person name="Madera M."/>
            <person name="Marchionni L."/>
            <person name="Matsuda H."/>
            <person name="Matsuzawa S."/>
            <person name="Miki H."/>
            <person name="Mignone F."/>
            <person name="Miyake S."/>
            <person name="Morris K."/>
            <person name="Mottagui-Tabar S."/>
            <person name="Mulder N."/>
            <person name="Nakano N."/>
            <person name="Nakauchi H."/>
            <person name="Ng P."/>
            <person name="Nilsson R."/>
            <person name="Nishiguchi S."/>
            <person name="Nishikawa S."/>
            <person name="Nori F."/>
            <person name="Ohara O."/>
            <person name="Okazaki Y."/>
            <person name="Orlando V."/>
            <person name="Pang K.C."/>
            <person name="Pavan W.J."/>
            <person name="Pavesi G."/>
            <person name="Pesole G."/>
            <person name="Petrovsky N."/>
            <person name="Piazza S."/>
            <person name="Reed J."/>
            <person name="Reid J.F."/>
            <person name="Ring B.Z."/>
            <person name="Ringwald M."/>
            <person name="Rost B."/>
            <person name="Ruan Y."/>
            <person name="Salzberg S.L."/>
            <person name="Sandelin A."/>
            <person name="Schneider C."/>
            <person name="Schoenbach C."/>
            <person name="Sekiguchi K."/>
            <person name="Semple C.A."/>
            <person name="Seno S."/>
            <person name="Sessa L."/>
            <person name="Sheng Y."/>
            <person name="Shibata Y."/>
            <person name="Shimada H."/>
            <person name="Shimada K."/>
            <person name="Silva D."/>
            <person name="Sinclair B."/>
            <person name="Sperling S."/>
            <person name="Stupka E."/>
            <person name="Sugiura K."/>
            <person name="Sultana R."/>
            <person name="Takenaka Y."/>
            <person name="Taki K."/>
            <person name="Tammoja K."/>
            <person name="Tan S.L."/>
            <person name="Tang S."/>
            <person name="Taylor M.S."/>
            <person name="Tegner J."/>
            <person name="Teichmann S.A."/>
            <person name="Ueda H.R."/>
            <person name="van Nimwegen E."/>
            <person name="Verardo R."/>
            <person name="Wei C.L."/>
            <person name="Yagi K."/>
            <person name="Yamanishi H."/>
            <person name="Zabarovsky E."/>
            <person name="Zhu S."/>
            <person name="Zimmer A."/>
            <person name="Hide W."/>
            <person name="Bult C."/>
            <person name="Grimmond S.M."/>
            <person name="Teasdale R.D."/>
            <person name="Liu E.T."/>
            <person name="Brusic V."/>
            <person name="Quackenbush J."/>
            <person name="Wahlestedt C."/>
            <person name="Mattick J.S."/>
            <person name="Hume D.A."/>
            <person name="Kai C."/>
            <person name="Sasaki D."/>
            <person name="Tomaru Y."/>
            <person name="Fukuda S."/>
            <person name="Kanamori-Katayama M."/>
            <person name="Suzuki M."/>
            <person name="Aoki J."/>
            <person name="Arakawa T."/>
            <person name="Iida J."/>
            <person name="Imamura K."/>
            <person name="Itoh M."/>
            <person name="Kato T."/>
            <person name="Kawaji H."/>
            <person name="Kawagashira N."/>
            <person name="Kawashima T."/>
            <person name="Kojima M."/>
            <person name="Kondo S."/>
            <person name="Konno H."/>
            <person name="Nakano K."/>
            <person name="Ninomiya N."/>
            <person name="Nishio T."/>
            <person name="Okada M."/>
            <person name="Plessy C."/>
            <person name="Shibata K."/>
            <person name="Shiraki T."/>
            <person name="Suzuki S."/>
            <person name="Tagami M."/>
            <person name="Waki K."/>
            <person name="Watahiki A."/>
            <person name="Okamura-Oho Y."/>
            <person name="Suzuki H."/>
            <person name="Kawai J."/>
            <person name="Hayashizaki Y."/>
        </authorList>
    </citation>
    <scope>NUCLEOTIDE SEQUENCE [LARGE SCALE MRNA] (ISOFORMS 1; 2; 3 AND 4)</scope>
    <source>
        <strain>C57BL/6J</strain>
        <tissue>Brain cortex</tissue>
        <tissue>Cerebellum</tissue>
        <tissue>Embryo</tissue>
        <tissue>Head</tissue>
        <tissue>Hypothalamus</tissue>
        <tissue>Pituitary</tissue>
        <tissue>Testis</tissue>
    </source>
</reference>
<reference key="2">
    <citation type="journal article" date="2004" name="Genome Res.">
        <title>The status, quality, and expansion of the NIH full-length cDNA project: the Mammalian Gene Collection (MGC).</title>
        <authorList>
            <consortium name="The MGC Project Team"/>
        </authorList>
    </citation>
    <scope>NUCLEOTIDE SEQUENCE [LARGE SCALE MRNA] (ISOFORM 1)</scope>
    <source>
        <strain>C57BL/6J</strain>
        <tissue>Eye</tissue>
    </source>
</reference>
<reference key="3">
    <citation type="journal article" date="2019" name="Commun. Biol.">
        <title>Calaxin is required for cilia-driven determination of vertebrate laterality.</title>
        <authorList>
            <person name="Sasaki K."/>
            <person name="Shiba K."/>
            <person name="Nakamura A."/>
            <person name="Kawano N."/>
            <person name="Satouh Y."/>
            <person name="Yamaguchi H."/>
            <person name="Morikawa M."/>
            <person name="Shibata D."/>
            <person name="Yanase R."/>
            <person name="Jokura K."/>
            <person name="Nomura M."/>
            <person name="Miyado M."/>
            <person name="Takada S."/>
            <person name="Ueno H."/>
            <person name="Nonaka S."/>
            <person name="Baba T."/>
            <person name="Ikawa M."/>
            <person name="Kikkawa M."/>
            <person name="Miyado K."/>
            <person name="Inaba K."/>
        </authorList>
    </citation>
    <scope>FUNCTION</scope>
    <scope>DISRUPTION PHENOTYPE</scope>
    <scope>SUBCELLULAR LOCATION</scope>
</reference>
<dbReference type="EMBL" id="AK015426">
    <property type="protein sequence ID" value="BAB29839.1"/>
    <property type="molecule type" value="mRNA"/>
</dbReference>
<dbReference type="EMBL" id="AK015866">
    <property type="protein sequence ID" value="BAB30007.1"/>
    <property type="molecule type" value="mRNA"/>
</dbReference>
<dbReference type="EMBL" id="AK017267">
    <property type="protein sequence ID" value="BAB30660.1"/>
    <property type="molecule type" value="mRNA"/>
</dbReference>
<dbReference type="EMBL" id="AK030381">
    <property type="protein sequence ID" value="BAC26934.1"/>
    <property type="molecule type" value="mRNA"/>
</dbReference>
<dbReference type="EMBL" id="AK038735">
    <property type="protein sequence ID" value="BAC30115.1"/>
    <property type="molecule type" value="mRNA"/>
</dbReference>
<dbReference type="EMBL" id="AK042748">
    <property type="protein sequence ID" value="BAC31349.1"/>
    <property type="molecule type" value="mRNA"/>
</dbReference>
<dbReference type="EMBL" id="AK043519">
    <property type="protein sequence ID" value="BAC31565.1"/>
    <property type="molecule type" value="mRNA"/>
</dbReference>
<dbReference type="EMBL" id="AK077722">
    <property type="protein sequence ID" value="BAC36981.1"/>
    <property type="molecule type" value="mRNA"/>
</dbReference>
<dbReference type="EMBL" id="BC085167">
    <property type="protein sequence ID" value="AAH85167.1"/>
    <property type="molecule type" value="mRNA"/>
</dbReference>
<dbReference type="CCDS" id="CCDS27975.1">
    <molecule id="Q9D3N2-1"/>
</dbReference>
<dbReference type="RefSeq" id="NP_080045.1">
    <molecule id="Q9D3N2-1"/>
    <property type="nucleotide sequence ID" value="NM_025769.3"/>
</dbReference>
<dbReference type="SMR" id="Q9D3N2"/>
<dbReference type="FunCoup" id="Q9D3N2">
    <property type="interactions" value="134"/>
</dbReference>
<dbReference type="STRING" id="10090.ENSMUSP00000087744"/>
<dbReference type="PhosphoSitePlus" id="Q9D3N2"/>
<dbReference type="PaxDb" id="10090-ENSMUSP00000087744"/>
<dbReference type="ProteomicsDB" id="277723">
    <molecule id="Q9D3N2-1"/>
</dbReference>
<dbReference type="ProteomicsDB" id="277724">
    <molecule id="Q9D3N2-2"/>
</dbReference>
<dbReference type="ProteomicsDB" id="277725">
    <molecule id="Q9D3N2-3"/>
</dbReference>
<dbReference type="ProteomicsDB" id="277726">
    <molecule id="Q9D3N2-4"/>
</dbReference>
<dbReference type="Antibodypedia" id="11583">
    <property type="antibodies" value="61 antibodies from 17 providers"/>
</dbReference>
<dbReference type="DNASU" id="66793"/>
<dbReference type="Ensembl" id="ENSMUST00000090277.3">
    <molecule id="Q9D3N2-1"/>
    <property type="protein sequence ID" value="ENSMUSP00000087744.2"/>
    <property type="gene ID" value="ENSMUSG00000068617.6"/>
</dbReference>
<dbReference type="Ensembl" id="ENSMUST00000228998.2">
    <molecule id="Q9D3N2-3"/>
    <property type="protein sequence ID" value="ENSMUSP00000155377.2"/>
    <property type="gene ID" value="ENSMUSG00000068617.6"/>
</dbReference>
<dbReference type="Ensembl" id="ENSMUST00000229121.2">
    <molecule id="Q9D3N2-2"/>
    <property type="protein sequence ID" value="ENSMUSP00000155692.2"/>
    <property type="gene ID" value="ENSMUSG00000068617.6"/>
</dbReference>
<dbReference type="Ensembl" id="ENSMUST00000229825.2">
    <molecule id="Q9D3N2-4"/>
    <property type="protein sequence ID" value="ENSMUSP00000155853.2"/>
    <property type="gene ID" value="ENSMUSG00000068617.6"/>
</dbReference>
<dbReference type="GeneID" id="66793"/>
<dbReference type="KEGG" id="mmu:66793"/>
<dbReference type="UCSC" id="uc007yhn.1">
    <molecule id="Q9D3N2-1"/>
    <property type="organism name" value="mouse"/>
</dbReference>
<dbReference type="AGR" id="MGI:1914043"/>
<dbReference type="CTD" id="79645"/>
<dbReference type="MGI" id="MGI:1914043">
    <property type="gene designation" value="Clxn"/>
</dbReference>
<dbReference type="VEuPathDB" id="HostDB:ENSMUSG00000068617"/>
<dbReference type="eggNOG" id="KOG0044">
    <property type="taxonomic scope" value="Eukaryota"/>
</dbReference>
<dbReference type="GeneTree" id="ENSGT00940000159968"/>
<dbReference type="HOGENOM" id="CLU_061288_3_2_1"/>
<dbReference type="InParanoid" id="Q9D3N2"/>
<dbReference type="OMA" id="DNDGCVS"/>
<dbReference type="OrthoDB" id="191686at2759"/>
<dbReference type="PhylomeDB" id="Q9D3N2"/>
<dbReference type="TreeFam" id="TF323358"/>
<dbReference type="BioGRID-ORCS" id="66793">
    <property type="hits" value="2 hits in 76 CRISPR screens"/>
</dbReference>
<dbReference type="PRO" id="PR:Q9D3N2"/>
<dbReference type="Proteomes" id="UP000000589">
    <property type="component" value="Chromosome 16"/>
</dbReference>
<dbReference type="RNAct" id="Q9D3N2">
    <property type="molecule type" value="protein"/>
</dbReference>
<dbReference type="Bgee" id="ENSMUSG00000068617">
    <property type="expression patterns" value="Expressed in islet of Langerhans and 130 other cell types or tissues"/>
</dbReference>
<dbReference type="GO" id="GO:0097729">
    <property type="term" value="C:9+2 motile cilium"/>
    <property type="evidence" value="ECO:0000266"/>
    <property type="project" value="MGI"/>
</dbReference>
<dbReference type="GO" id="GO:0005930">
    <property type="term" value="C:axoneme"/>
    <property type="evidence" value="ECO:0000266"/>
    <property type="project" value="MGI"/>
</dbReference>
<dbReference type="GO" id="GO:0005929">
    <property type="term" value="C:cilium"/>
    <property type="evidence" value="ECO:0000314"/>
    <property type="project" value="UniProtKB"/>
</dbReference>
<dbReference type="GO" id="GO:0036126">
    <property type="term" value="C:sperm flagellum"/>
    <property type="evidence" value="ECO:0000250"/>
    <property type="project" value="UniProtKB"/>
</dbReference>
<dbReference type="GO" id="GO:0048487">
    <property type="term" value="F:beta-tubulin binding"/>
    <property type="evidence" value="ECO:0000266"/>
    <property type="project" value="MGI"/>
</dbReference>
<dbReference type="GO" id="GO:0005509">
    <property type="term" value="F:calcium ion binding"/>
    <property type="evidence" value="ECO:0000266"/>
    <property type="project" value="MGI"/>
</dbReference>
<dbReference type="GO" id="GO:0120152">
    <property type="term" value="F:calcium-dependent outer dynein arm binding"/>
    <property type="evidence" value="ECO:0000266"/>
    <property type="project" value="MGI"/>
</dbReference>
<dbReference type="GO" id="GO:0140659">
    <property type="term" value="F:cytoskeletal motor regulator activity"/>
    <property type="evidence" value="ECO:0000266"/>
    <property type="project" value="MGI"/>
</dbReference>
<dbReference type="GO" id="GO:0045504">
    <property type="term" value="F:dynein heavy chain binding"/>
    <property type="evidence" value="ECO:0000266"/>
    <property type="project" value="MGI"/>
</dbReference>
<dbReference type="GO" id="GO:0060326">
    <property type="term" value="P:cell chemotaxis"/>
    <property type="evidence" value="ECO:0000266"/>
    <property type="project" value="MGI"/>
</dbReference>
<dbReference type="GO" id="GO:0003341">
    <property type="term" value="P:cilium movement"/>
    <property type="evidence" value="ECO:0000250"/>
    <property type="project" value="UniProtKB"/>
</dbReference>
<dbReference type="GO" id="GO:0036158">
    <property type="term" value="P:outer dynein arm assembly"/>
    <property type="evidence" value="ECO:0000250"/>
    <property type="project" value="UniProtKB"/>
</dbReference>
<dbReference type="GO" id="GO:0003352">
    <property type="term" value="P:regulation of cilium movement"/>
    <property type="evidence" value="ECO:0000315"/>
    <property type="project" value="UniProtKB"/>
</dbReference>
<dbReference type="GO" id="GO:1901317">
    <property type="term" value="P:regulation of flagellated sperm motility"/>
    <property type="evidence" value="ECO:0000315"/>
    <property type="project" value="UniProtKB"/>
</dbReference>
<dbReference type="CDD" id="cd00051">
    <property type="entry name" value="EFh"/>
    <property type="match status" value="2"/>
</dbReference>
<dbReference type="FunFam" id="1.10.238.10:FF:000073">
    <property type="entry name" value="calcineurin B-like protein 3"/>
    <property type="match status" value="1"/>
</dbReference>
<dbReference type="Gene3D" id="1.10.238.10">
    <property type="entry name" value="EF-hand"/>
    <property type="match status" value="1"/>
</dbReference>
<dbReference type="InterPro" id="IPR011992">
    <property type="entry name" value="EF-hand-dom_pair"/>
</dbReference>
<dbReference type="InterPro" id="IPR018247">
    <property type="entry name" value="EF_Hand_1_Ca_BS"/>
</dbReference>
<dbReference type="InterPro" id="IPR002048">
    <property type="entry name" value="EF_hand_dom"/>
</dbReference>
<dbReference type="InterPro" id="IPR028846">
    <property type="entry name" value="Recoverin"/>
</dbReference>
<dbReference type="PANTHER" id="PTHR23055:SF75">
    <property type="entry name" value="CALAXIN"/>
    <property type="match status" value="1"/>
</dbReference>
<dbReference type="PANTHER" id="PTHR23055">
    <property type="entry name" value="CALCIUM BINDING PROTEINS"/>
    <property type="match status" value="1"/>
</dbReference>
<dbReference type="Pfam" id="PF00036">
    <property type="entry name" value="EF-hand_1"/>
    <property type="match status" value="1"/>
</dbReference>
<dbReference type="Pfam" id="PF13499">
    <property type="entry name" value="EF-hand_7"/>
    <property type="match status" value="1"/>
</dbReference>
<dbReference type="PRINTS" id="PR00450">
    <property type="entry name" value="RECOVERIN"/>
</dbReference>
<dbReference type="SMART" id="SM00054">
    <property type="entry name" value="EFh"/>
    <property type="match status" value="3"/>
</dbReference>
<dbReference type="SUPFAM" id="SSF47473">
    <property type="entry name" value="EF-hand"/>
    <property type="match status" value="1"/>
</dbReference>
<dbReference type="PROSITE" id="PS00018">
    <property type="entry name" value="EF_HAND_1"/>
    <property type="match status" value="3"/>
</dbReference>
<dbReference type="PROSITE" id="PS50222">
    <property type="entry name" value="EF_HAND_2"/>
    <property type="match status" value="3"/>
</dbReference>
<name>CLXN_MOUSE</name>
<feature type="chain" id="PRO_0000251970" description="Calaxin">
    <location>
        <begin position="1"/>
        <end position="212"/>
    </location>
</feature>
<feature type="domain" description="EF-hand 1" evidence="3">
    <location>
        <begin position="65"/>
        <end position="100"/>
    </location>
</feature>
<feature type="domain" description="EF-hand 2" evidence="3">
    <location>
        <begin position="101"/>
        <end position="136"/>
    </location>
</feature>
<feature type="domain" description="EF-hand 3" evidence="3">
    <location>
        <begin position="146"/>
        <end position="181"/>
    </location>
</feature>
<feature type="binding site" evidence="3">
    <location>
        <position position="78"/>
    </location>
    <ligand>
        <name>Ca(2+)</name>
        <dbReference type="ChEBI" id="CHEBI:29108"/>
        <label>1</label>
    </ligand>
</feature>
<feature type="binding site" evidence="3">
    <location>
        <position position="80"/>
    </location>
    <ligand>
        <name>Ca(2+)</name>
        <dbReference type="ChEBI" id="CHEBI:29108"/>
        <label>1</label>
    </ligand>
</feature>
<feature type="binding site" evidence="3">
    <location>
        <position position="82"/>
    </location>
    <ligand>
        <name>Ca(2+)</name>
        <dbReference type="ChEBI" id="CHEBI:29108"/>
        <label>1</label>
    </ligand>
</feature>
<feature type="binding site" evidence="3">
    <location>
        <position position="84"/>
    </location>
    <ligand>
        <name>Ca(2+)</name>
        <dbReference type="ChEBI" id="CHEBI:29108"/>
        <label>1</label>
    </ligand>
</feature>
<feature type="binding site" evidence="3">
    <location>
        <position position="89"/>
    </location>
    <ligand>
        <name>Ca(2+)</name>
        <dbReference type="ChEBI" id="CHEBI:29108"/>
        <label>1</label>
    </ligand>
</feature>
<feature type="binding site" evidence="3">
    <location>
        <position position="114"/>
    </location>
    <ligand>
        <name>Ca(2+)</name>
        <dbReference type="ChEBI" id="CHEBI:29108"/>
        <label>2</label>
    </ligand>
</feature>
<feature type="binding site" evidence="3">
    <location>
        <position position="116"/>
    </location>
    <ligand>
        <name>Ca(2+)</name>
        <dbReference type="ChEBI" id="CHEBI:29108"/>
        <label>2</label>
    </ligand>
</feature>
<feature type="binding site" evidence="3">
    <location>
        <position position="118"/>
    </location>
    <ligand>
        <name>Ca(2+)</name>
        <dbReference type="ChEBI" id="CHEBI:29108"/>
        <label>2</label>
    </ligand>
</feature>
<feature type="binding site" evidence="3">
    <location>
        <position position="125"/>
    </location>
    <ligand>
        <name>Ca(2+)</name>
        <dbReference type="ChEBI" id="CHEBI:29108"/>
        <label>2</label>
    </ligand>
</feature>
<feature type="binding site" evidence="3">
    <location>
        <position position="159"/>
    </location>
    <ligand>
        <name>Ca(2+)</name>
        <dbReference type="ChEBI" id="CHEBI:29108"/>
        <label>3</label>
    </ligand>
</feature>
<feature type="binding site" evidence="3">
    <location>
        <position position="161"/>
    </location>
    <ligand>
        <name>Ca(2+)</name>
        <dbReference type="ChEBI" id="CHEBI:29108"/>
        <label>3</label>
    </ligand>
</feature>
<feature type="binding site" evidence="3">
    <location>
        <position position="163"/>
    </location>
    <ligand>
        <name>Ca(2+)</name>
        <dbReference type="ChEBI" id="CHEBI:29108"/>
        <label>3</label>
    </ligand>
</feature>
<feature type="binding site" evidence="3">
    <location>
        <position position="165"/>
    </location>
    <ligand>
        <name>Ca(2+)</name>
        <dbReference type="ChEBI" id="CHEBI:29108"/>
        <label>3</label>
    </ligand>
</feature>
<feature type="binding site" evidence="3">
    <location>
        <position position="170"/>
    </location>
    <ligand>
        <name>Ca(2+)</name>
        <dbReference type="ChEBI" id="CHEBI:29108"/>
        <label>3</label>
    </ligand>
</feature>
<feature type="splice variant" id="VSP_020827" description="In isoform 4." evidence="5">
    <location>
        <begin position="108"/>
        <end position="212"/>
    </location>
</feature>
<feature type="splice variant" id="VSP_020828" description="In isoform 3." evidence="5">
    <original>DHDHDGKLSFV</original>
    <variation>CAFAARMPCSD</variation>
    <location>
        <begin position="159"/>
        <end position="169"/>
    </location>
</feature>
<feature type="splice variant" id="VSP_020829" description="In isoform 3." evidence="5">
    <location>
        <begin position="170"/>
        <end position="212"/>
    </location>
</feature>
<feature type="splice variant" id="VSP_020830" description="In isoform 2." evidence="5">
    <original>SQ</original>
    <variation>LK</variation>
    <location>
        <begin position="194"/>
        <end position="195"/>
    </location>
</feature>
<feature type="splice variant" id="VSP_020831" description="In isoform 2." evidence="5">
    <location>
        <begin position="196"/>
        <end position="212"/>
    </location>
</feature>
<feature type="sequence conflict" description="In Ref. 1; BAB29839." evidence="7" ref="1">
    <original>L</original>
    <variation>Q</variation>
    <location>
        <position position="6"/>
    </location>
</feature>
<feature type="sequence conflict" description="In Ref. 1; BAC30115." evidence="7" ref="1">
    <original>L</original>
    <variation>W</variation>
    <location>
        <position position="35"/>
    </location>
</feature>
<feature type="sequence conflict" description="In Ref. 1; BAC26934." evidence="7" ref="1">
    <original>K</original>
    <variation>R</variation>
    <location>
        <position position="105"/>
    </location>
</feature>
<protein>
    <recommendedName>
        <fullName evidence="6">Calaxin</fullName>
    </recommendedName>
    <alternativeName>
        <fullName>EF-hand calcium-binding domain-containing protein 1</fullName>
    </alternativeName>
</protein>
<comment type="function">
    <text evidence="1 4">Component of the outer dynein arm-docking complex (ODA-DC) that mediates outer dynein arms (ODA) binding onto the doublet microtubule. Seems to regulate the assembly of both ODAs and their axonemal docking complex onto ciliary microtubules (By similarity). Regulates ciliary and flagellar motility and is required for cilia-driven determination of body laterality (PubMed:31240264).</text>
</comment>
<comment type="subunit">
    <text evidence="1">Component of the outer dynein arm-docking complex along with ODAD1, ODAD2, ODAD3 and ODAD4.</text>
</comment>
<comment type="subcellular location">
    <subcellularLocation>
        <location evidence="4">Cytoplasm</location>
        <location evidence="4">Cytoskeleton</location>
        <location evidence="4">Cilium axoneme</location>
    </subcellularLocation>
    <subcellularLocation>
        <location evidence="2">Cell projection</location>
        <location evidence="2">Cilium</location>
    </subcellularLocation>
    <subcellularLocation>
        <location evidence="2">Cell projection</location>
        <location evidence="2">Cilium</location>
        <location evidence="2">Flagellum</location>
    </subcellularLocation>
</comment>
<comment type="alternative products">
    <event type="alternative splicing"/>
    <isoform>
        <id>Q9D3N2-1</id>
        <name>1</name>
        <sequence type="displayed"/>
    </isoform>
    <isoform>
        <id>Q9D3N2-2</id>
        <name>2</name>
        <sequence type="described" ref="VSP_020830 VSP_020831"/>
    </isoform>
    <isoform>
        <id>Q9D3N2-3</id>
        <name>3</name>
        <sequence type="described" ref="VSP_020828 VSP_020829"/>
    </isoform>
    <isoform>
        <id>Q9D3N2-4</id>
        <name>4</name>
        <sequence type="described" ref="VSP_020827"/>
    </isoform>
</comment>
<comment type="disruption phenotype">
    <text evidence="4">Mice display typical phenotypes of primary ciliary dyskinesia, including hydrocephalus, situs inversus, and abnormal motility of trachea cilia and sperm flagella (PubMed:31240264). Strikingly, both males and females are viable and fertile (PubMed:31240264). The 9 + 2 axonemal structures of epithelial multicilia and sperm flagella are normal, but the formation of 9 + 0 nodal cilia is significantly disrupted (PubMed:31240264).</text>
</comment>
<proteinExistence type="evidence at transcript level"/>
<sequence>MNRKKLQKLTDTLTKNCKHFDKFEVKCLITLFYNLVGDVAERPGVVTGLDRNVFRNILHVTFGMTDDMIMDRVFRGFDKDNDGCISVSEWIHGLSLFLRGTLDEKMKYCFEVFDLNGDGFISKEEMFHMLKNSLLKQPSEEDPDEGIKDLVEITLKKMDHDHDGKLSFVDYEKAVREENLLLEAFGPCLPDPKSQMEFEAQVFKDPNEFNDM</sequence>